<reference key="1">
    <citation type="journal article" date="2003" name="Lancet">
        <title>Sequencing and analysis of the genome of the Whipple's disease bacterium Tropheryma whipplei.</title>
        <authorList>
            <person name="Bentley S.D."/>
            <person name="Maiwald M."/>
            <person name="Murphy L.D."/>
            <person name="Pallen M.J."/>
            <person name="Yeats C.A."/>
            <person name="Dover L.G."/>
            <person name="Norbertczak H.T."/>
            <person name="Besra G.S."/>
            <person name="Quail M.A."/>
            <person name="Harris D.E."/>
            <person name="von Herbay A."/>
            <person name="Goble A."/>
            <person name="Rutter S."/>
            <person name="Squares R."/>
            <person name="Squares S."/>
            <person name="Barrell B.G."/>
            <person name="Parkhill J."/>
            <person name="Relman D.A."/>
        </authorList>
    </citation>
    <scope>NUCLEOTIDE SEQUENCE [LARGE SCALE GENOMIC DNA]</scope>
    <source>
        <strain>TW08/27</strain>
    </source>
</reference>
<keyword id="KW-0687">Ribonucleoprotein</keyword>
<keyword id="KW-0689">Ribosomal protein</keyword>
<sequence length="79" mass="9008">MLGSKGLSPTDLRGMTDGHLRVELKNAKEEVFKLRFQSATGQLAHNARLRAVRRDIARIYTVMRERDIGIRSVQEEVSQ</sequence>
<comment type="similarity">
    <text evidence="1">Belongs to the universal ribosomal protein uL29 family.</text>
</comment>
<name>RL29_TROW8</name>
<organism>
    <name type="scientific">Tropheryma whipplei (strain TW08/27)</name>
    <name type="common">Whipple's bacillus</name>
    <dbReference type="NCBI Taxonomy" id="218496"/>
    <lineage>
        <taxon>Bacteria</taxon>
        <taxon>Bacillati</taxon>
        <taxon>Actinomycetota</taxon>
        <taxon>Actinomycetes</taxon>
        <taxon>Micrococcales</taxon>
        <taxon>Tropherymataceae</taxon>
        <taxon>Tropheryma</taxon>
    </lineage>
</organism>
<evidence type="ECO:0000255" key="1">
    <source>
        <dbReference type="HAMAP-Rule" id="MF_00374"/>
    </source>
</evidence>
<evidence type="ECO:0000305" key="2"/>
<accession>Q83I70</accession>
<proteinExistence type="inferred from homology"/>
<feature type="chain" id="PRO_0000130488" description="Large ribosomal subunit protein uL29">
    <location>
        <begin position="1"/>
        <end position="79"/>
    </location>
</feature>
<gene>
    <name evidence="1" type="primary">rpmC</name>
    <name type="ordered locus">TW215</name>
</gene>
<protein>
    <recommendedName>
        <fullName evidence="1">Large ribosomal subunit protein uL29</fullName>
    </recommendedName>
    <alternativeName>
        <fullName evidence="2">50S ribosomal protein L29</fullName>
    </alternativeName>
</protein>
<dbReference type="EMBL" id="BX251410">
    <property type="protein sequence ID" value="CAD66892.1"/>
    <property type="molecule type" value="Genomic_DNA"/>
</dbReference>
<dbReference type="SMR" id="Q83I70"/>
<dbReference type="KEGG" id="tws:TW215"/>
<dbReference type="HOGENOM" id="CLU_158491_3_3_11"/>
<dbReference type="GO" id="GO:0022625">
    <property type="term" value="C:cytosolic large ribosomal subunit"/>
    <property type="evidence" value="ECO:0007669"/>
    <property type="project" value="TreeGrafter"/>
</dbReference>
<dbReference type="GO" id="GO:0003735">
    <property type="term" value="F:structural constituent of ribosome"/>
    <property type="evidence" value="ECO:0007669"/>
    <property type="project" value="InterPro"/>
</dbReference>
<dbReference type="GO" id="GO:0006412">
    <property type="term" value="P:translation"/>
    <property type="evidence" value="ECO:0007669"/>
    <property type="project" value="UniProtKB-UniRule"/>
</dbReference>
<dbReference type="CDD" id="cd00427">
    <property type="entry name" value="Ribosomal_L29_HIP"/>
    <property type="match status" value="1"/>
</dbReference>
<dbReference type="FunFam" id="1.10.287.310:FF:000001">
    <property type="entry name" value="50S ribosomal protein L29"/>
    <property type="match status" value="1"/>
</dbReference>
<dbReference type="Gene3D" id="1.10.287.310">
    <property type="match status" value="1"/>
</dbReference>
<dbReference type="HAMAP" id="MF_00374">
    <property type="entry name" value="Ribosomal_uL29"/>
    <property type="match status" value="1"/>
</dbReference>
<dbReference type="InterPro" id="IPR050063">
    <property type="entry name" value="Ribosomal_protein_uL29"/>
</dbReference>
<dbReference type="InterPro" id="IPR001854">
    <property type="entry name" value="Ribosomal_uL29"/>
</dbReference>
<dbReference type="InterPro" id="IPR036049">
    <property type="entry name" value="Ribosomal_uL29_sf"/>
</dbReference>
<dbReference type="NCBIfam" id="TIGR00012">
    <property type="entry name" value="L29"/>
    <property type="match status" value="1"/>
</dbReference>
<dbReference type="PANTHER" id="PTHR10916">
    <property type="entry name" value="60S RIBOSOMAL PROTEIN L35/50S RIBOSOMAL PROTEIN L29"/>
    <property type="match status" value="1"/>
</dbReference>
<dbReference type="PANTHER" id="PTHR10916:SF0">
    <property type="entry name" value="LARGE RIBOSOMAL SUBUNIT PROTEIN UL29C"/>
    <property type="match status" value="1"/>
</dbReference>
<dbReference type="Pfam" id="PF00831">
    <property type="entry name" value="Ribosomal_L29"/>
    <property type="match status" value="1"/>
</dbReference>
<dbReference type="SUPFAM" id="SSF46561">
    <property type="entry name" value="Ribosomal protein L29 (L29p)"/>
    <property type="match status" value="1"/>
</dbReference>